<dbReference type="EMBL" id="CP000001">
    <property type="protein sequence ID" value="AAU20125.1"/>
    <property type="molecule type" value="Genomic_DNA"/>
</dbReference>
<dbReference type="RefSeq" id="WP_001127258.1">
    <property type="nucleotide sequence ID" value="NZ_CP009968.1"/>
</dbReference>
<dbReference type="SMR" id="Q63H89"/>
<dbReference type="GeneID" id="93010942"/>
<dbReference type="KEGG" id="bcz:BCE33L0105"/>
<dbReference type="PATRIC" id="fig|288681.22.peg.46"/>
<dbReference type="Proteomes" id="UP000002612">
    <property type="component" value="Chromosome"/>
</dbReference>
<dbReference type="GO" id="GO:1990904">
    <property type="term" value="C:ribonucleoprotein complex"/>
    <property type="evidence" value="ECO:0007669"/>
    <property type="project" value="UniProtKB-KW"/>
</dbReference>
<dbReference type="GO" id="GO:0005840">
    <property type="term" value="C:ribosome"/>
    <property type="evidence" value="ECO:0007669"/>
    <property type="project" value="UniProtKB-KW"/>
</dbReference>
<dbReference type="GO" id="GO:0019843">
    <property type="term" value="F:rRNA binding"/>
    <property type="evidence" value="ECO:0007669"/>
    <property type="project" value="UniProtKB-UniRule"/>
</dbReference>
<dbReference type="GO" id="GO:0003735">
    <property type="term" value="F:structural constituent of ribosome"/>
    <property type="evidence" value="ECO:0007669"/>
    <property type="project" value="InterPro"/>
</dbReference>
<dbReference type="GO" id="GO:0006412">
    <property type="term" value="P:translation"/>
    <property type="evidence" value="ECO:0007669"/>
    <property type="project" value="UniProtKB-UniRule"/>
</dbReference>
<dbReference type="FunFam" id="3.40.1370.10:FF:000003">
    <property type="entry name" value="50S ribosomal protein L4"/>
    <property type="match status" value="1"/>
</dbReference>
<dbReference type="Gene3D" id="3.40.1370.10">
    <property type="match status" value="1"/>
</dbReference>
<dbReference type="HAMAP" id="MF_01328_B">
    <property type="entry name" value="Ribosomal_uL4_B"/>
    <property type="match status" value="1"/>
</dbReference>
<dbReference type="InterPro" id="IPR002136">
    <property type="entry name" value="Ribosomal_uL4"/>
</dbReference>
<dbReference type="InterPro" id="IPR013005">
    <property type="entry name" value="Ribosomal_uL4-like"/>
</dbReference>
<dbReference type="InterPro" id="IPR023574">
    <property type="entry name" value="Ribosomal_uL4_dom_sf"/>
</dbReference>
<dbReference type="NCBIfam" id="TIGR03953">
    <property type="entry name" value="rplD_bact"/>
    <property type="match status" value="1"/>
</dbReference>
<dbReference type="PANTHER" id="PTHR10746">
    <property type="entry name" value="50S RIBOSOMAL PROTEIN L4"/>
    <property type="match status" value="1"/>
</dbReference>
<dbReference type="PANTHER" id="PTHR10746:SF6">
    <property type="entry name" value="LARGE RIBOSOMAL SUBUNIT PROTEIN UL4M"/>
    <property type="match status" value="1"/>
</dbReference>
<dbReference type="Pfam" id="PF00573">
    <property type="entry name" value="Ribosomal_L4"/>
    <property type="match status" value="1"/>
</dbReference>
<dbReference type="SUPFAM" id="SSF52166">
    <property type="entry name" value="Ribosomal protein L4"/>
    <property type="match status" value="1"/>
</dbReference>
<reference key="1">
    <citation type="journal article" date="2006" name="J. Bacteriol.">
        <title>Pathogenomic sequence analysis of Bacillus cereus and Bacillus thuringiensis isolates closely related to Bacillus anthracis.</title>
        <authorList>
            <person name="Han C.S."/>
            <person name="Xie G."/>
            <person name="Challacombe J.F."/>
            <person name="Altherr M.R."/>
            <person name="Bhotika S.S."/>
            <person name="Bruce D."/>
            <person name="Campbell C.S."/>
            <person name="Campbell M.L."/>
            <person name="Chen J."/>
            <person name="Chertkov O."/>
            <person name="Cleland C."/>
            <person name="Dimitrijevic M."/>
            <person name="Doggett N.A."/>
            <person name="Fawcett J.J."/>
            <person name="Glavina T."/>
            <person name="Goodwin L.A."/>
            <person name="Hill K.K."/>
            <person name="Hitchcock P."/>
            <person name="Jackson P.J."/>
            <person name="Keim P."/>
            <person name="Kewalramani A.R."/>
            <person name="Longmire J."/>
            <person name="Lucas S."/>
            <person name="Malfatti S."/>
            <person name="McMurry K."/>
            <person name="Meincke L.J."/>
            <person name="Misra M."/>
            <person name="Moseman B.L."/>
            <person name="Mundt M."/>
            <person name="Munk A.C."/>
            <person name="Okinaka R.T."/>
            <person name="Parson-Quintana B."/>
            <person name="Reilly L.P."/>
            <person name="Richardson P."/>
            <person name="Robinson D.L."/>
            <person name="Rubin E."/>
            <person name="Saunders E."/>
            <person name="Tapia R."/>
            <person name="Tesmer J.G."/>
            <person name="Thayer N."/>
            <person name="Thompson L.S."/>
            <person name="Tice H."/>
            <person name="Ticknor L.O."/>
            <person name="Wills P.L."/>
            <person name="Brettin T.S."/>
            <person name="Gilna P."/>
        </authorList>
    </citation>
    <scope>NUCLEOTIDE SEQUENCE [LARGE SCALE GENOMIC DNA]</scope>
    <source>
        <strain>ZK / E33L</strain>
    </source>
</reference>
<gene>
    <name evidence="1" type="primary">rplD</name>
    <name type="ordered locus">BCE33L0105</name>
</gene>
<sequence>MPKVTVYNQTGSQVGEIELAEAIFGIEPNEAVLFEAVMMQRASLRQGTHKVKTRSEVRGGGRKPWRQKGTGRARQGSIRSPQWRGGGTVFGPTPRSYAYKLPKKVRRLAIKSALATKVVENNIVVLEDLVLNAPKTKDMLAVLKGLTVEKKALIVTADANESVELSARNIPGVTVITADGVNVLDVLHHDKLIMTKAAVEKVEEVLA</sequence>
<feature type="chain" id="PRO_0000242338" description="Large ribosomal subunit protein uL4">
    <location>
        <begin position="1"/>
        <end position="207"/>
    </location>
</feature>
<feature type="region of interest" description="Disordered" evidence="2">
    <location>
        <begin position="45"/>
        <end position="89"/>
    </location>
</feature>
<feature type="compositionally biased region" description="Basic residues" evidence="2">
    <location>
        <begin position="60"/>
        <end position="71"/>
    </location>
</feature>
<keyword id="KW-0687">Ribonucleoprotein</keyword>
<keyword id="KW-0689">Ribosomal protein</keyword>
<keyword id="KW-0694">RNA-binding</keyword>
<keyword id="KW-0699">rRNA-binding</keyword>
<proteinExistence type="inferred from homology"/>
<evidence type="ECO:0000255" key="1">
    <source>
        <dbReference type="HAMAP-Rule" id="MF_01328"/>
    </source>
</evidence>
<evidence type="ECO:0000256" key="2">
    <source>
        <dbReference type="SAM" id="MobiDB-lite"/>
    </source>
</evidence>
<evidence type="ECO:0000305" key="3"/>
<organism>
    <name type="scientific">Bacillus cereus (strain ZK / E33L)</name>
    <dbReference type="NCBI Taxonomy" id="288681"/>
    <lineage>
        <taxon>Bacteria</taxon>
        <taxon>Bacillati</taxon>
        <taxon>Bacillota</taxon>
        <taxon>Bacilli</taxon>
        <taxon>Bacillales</taxon>
        <taxon>Bacillaceae</taxon>
        <taxon>Bacillus</taxon>
        <taxon>Bacillus cereus group</taxon>
    </lineage>
</organism>
<accession>Q63H89</accession>
<comment type="function">
    <text evidence="1">One of the primary rRNA binding proteins, this protein initially binds near the 5'-end of the 23S rRNA. It is important during the early stages of 50S assembly. It makes multiple contacts with different domains of the 23S rRNA in the assembled 50S subunit and ribosome.</text>
</comment>
<comment type="function">
    <text evidence="1">Forms part of the polypeptide exit tunnel.</text>
</comment>
<comment type="subunit">
    <text evidence="1">Part of the 50S ribosomal subunit.</text>
</comment>
<comment type="similarity">
    <text evidence="1">Belongs to the universal ribosomal protein uL4 family.</text>
</comment>
<name>RL4_BACCZ</name>
<protein>
    <recommendedName>
        <fullName evidence="1">Large ribosomal subunit protein uL4</fullName>
    </recommendedName>
    <alternativeName>
        <fullName evidence="3">50S ribosomal protein L4</fullName>
    </alternativeName>
</protein>